<feature type="chain" id="PRO_1000022612" description="ATP-dependent Clp protease adapter protein ClpS">
    <location>
        <begin position="1"/>
        <end position="107"/>
    </location>
</feature>
<feature type="region of interest" description="Disordered" evidence="2">
    <location>
        <begin position="1"/>
        <end position="20"/>
    </location>
</feature>
<name>CLPS_MYXXD</name>
<reference key="1">
    <citation type="journal article" date="2006" name="Proc. Natl. Acad. Sci. U.S.A.">
        <title>Evolution of sensory complexity recorded in a myxobacterial genome.</title>
        <authorList>
            <person name="Goldman B.S."/>
            <person name="Nierman W.C."/>
            <person name="Kaiser D."/>
            <person name="Slater S.C."/>
            <person name="Durkin A.S."/>
            <person name="Eisen J.A."/>
            <person name="Ronning C.M."/>
            <person name="Barbazuk W.B."/>
            <person name="Blanchard M."/>
            <person name="Field C."/>
            <person name="Halling C."/>
            <person name="Hinkle G."/>
            <person name="Iartchuk O."/>
            <person name="Kim H.S."/>
            <person name="Mackenzie C."/>
            <person name="Madupu R."/>
            <person name="Miller N."/>
            <person name="Shvartsbeyn A."/>
            <person name="Sullivan S.A."/>
            <person name="Vaudin M."/>
            <person name="Wiegand R."/>
            <person name="Kaplan H.B."/>
        </authorList>
    </citation>
    <scope>NUCLEOTIDE SEQUENCE [LARGE SCALE GENOMIC DNA]</scope>
    <source>
        <strain>DK1622</strain>
    </source>
</reference>
<keyword id="KW-1185">Reference proteome</keyword>
<comment type="function">
    <text evidence="1">Involved in the modulation of the specificity of the ClpAP-mediated ATP-dependent protein degradation.</text>
</comment>
<comment type="subunit">
    <text evidence="1">Binds to the N-terminal domain of the chaperone ClpA.</text>
</comment>
<comment type="similarity">
    <text evidence="1">Belongs to the ClpS family.</text>
</comment>
<evidence type="ECO:0000255" key="1">
    <source>
        <dbReference type="HAMAP-Rule" id="MF_00302"/>
    </source>
</evidence>
<evidence type="ECO:0000256" key="2">
    <source>
        <dbReference type="SAM" id="MobiDB-lite"/>
    </source>
</evidence>
<protein>
    <recommendedName>
        <fullName evidence="1">ATP-dependent Clp protease adapter protein ClpS</fullName>
    </recommendedName>
</protein>
<sequence>MAQKHEHDTSVITESAPKQKLKKPPLYKVLLHNDNYTTREFVVAVLKEVFHKSETDAVQIMLHVHYNGVGVAGVYTYDVAETKIQTVEAAAQENDMPLRLSMEPEEG</sequence>
<gene>
    <name evidence="1" type="primary">clpS</name>
    <name type="ordered locus">MXAN_6025</name>
</gene>
<dbReference type="EMBL" id="CP000113">
    <property type="protein sequence ID" value="ABF87400.1"/>
    <property type="molecule type" value="Genomic_DNA"/>
</dbReference>
<dbReference type="RefSeq" id="WP_011555974.1">
    <property type="nucleotide sequence ID" value="NC_008095.1"/>
</dbReference>
<dbReference type="SMR" id="Q1CZL3"/>
<dbReference type="STRING" id="246197.MXAN_6025"/>
<dbReference type="EnsemblBacteria" id="ABF87400">
    <property type="protein sequence ID" value="ABF87400"/>
    <property type="gene ID" value="MXAN_6025"/>
</dbReference>
<dbReference type="GeneID" id="41363263"/>
<dbReference type="KEGG" id="mxa:MXAN_6025"/>
<dbReference type="eggNOG" id="COG2127">
    <property type="taxonomic scope" value="Bacteria"/>
</dbReference>
<dbReference type="HOGENOM" id="CLU_134358_0_0_7"/>
<dbReference type="OrthoDB" id="9796121at2"/>
<dbReference type="Proteomes" id="UP000002402">
    <property type="component" value="Chromosome"/>
</dbReference>
<dbReference type="GO" id="GO:0030163">
    <property type="term" value="P:protein catabolic process"/>
    <property type="evidence" value="ECO:0007669"/>
    <property type="project" value="InterPro"/>
</dbReference>
<dbReference type="GO" id="GO:0006508">
    <property type="term" value="P:proteolysis"/>
    <property type="evidence" value="ECO:0007669"/>
    <property type="project" value="UniProtKB-UniRule"/>
</dbReference>
<dbReference type="FunFam" id="3.30.1390.10:FF:000002">
    <property type="entry name" value="ATP-dependent Clp protease adapter protein ClpS"/>
    <property type="match status" value="1"/>
</dbReference>
<dbReference type="Gene3D" id="3.30.1390.10">
    <property type="match status" value="1"/>
</dbReference>
<dbReference type="HAMAP" id="MF_00302">
    <property type="entry name" value="ClpS"/>
    <property type="match status" value="1"/>
</dbReference>
<dbReference type="InterPro" id="IPR022935">
    <property type="entry name" value="ClpS"/>
</dbReference>
<dbReference type="InterPro" id="IPR003769">
    <property type="entry name" value="ClpS_core"/>
</dbReference>
<dbReference type="InterPro" id="IPR014719">
    <property type="entry name" value="Ribosomal_bL12_C/ClpS-like"/>
</dbReference>
<dbReference type="PANTHER" id="PTHR33473:SF19">
    <property type="entry name" value="ATP-DEPENDENT CLP PROTEASE ADAPTER PROTEIN CLPS"/>
    <property type="match status" value="1"/>
</dbReference>
<dbReference type="PANTHER" id="PTHR33473">
    <property type="entry name" value="ATP-DEPENDENT CLP PROTEASE ADAPTER PROTEIN CLPS1, CHLOROPLASTIC"/>
    <property type="match status" value="1"/>
</dbReference>
<dbReference type="Pfam" id="PF02617">
    <property type="entry name" value="ClpS"/>
    <property type="match status" value="1"/>
</dbReference>
<dbReference type="SUPFAM" id="SSF54736">
    <property type="entry name" value="ClpS-like"/>
    <property type="match status" value="1"/>
</dbReference>
<proteinExistence type="inferred from homology"/>
<accession>Q1CZL3</accession>
<organism>
    <name type="scientific">Myxococcus xanthus (strain DK1622)</name>
    <dbReference type="NCBI Taxonomy" id="246197"/>
    <lineage>
        <taxon>Bacteria</taxon>
        <taxon>Pseudomonadati</taxon>
        <taxon>Myxococcota</taxon>
        <taxon>Myxococcia</taxon>
        <taxon>Myxococcales</taxon>
        <taxon>Cystobacterineae</taxon>
        <taxon>Myxococcaceae</taxon>
        <taxon>Myxococcus</taxon>
    </lineage>
</organism>